<keyword id="KW-0963">Cytoplasm</keyword>
<keyword id="KW-0413">Isomerase</keyword>
<keyword id="KW-0464">Manganese</keyword>
<keyword id="KW-0479">Metal-binding</keyword>
<keyword id="KW-0684">Rhamnose metabolism</keyword>
<evidence type="ECO:0000255" key="1">
    <source>
        <dbReference type="HAMAP-Rule" id="MF_00541"/>
    </source>
</evidence>
<gene>
    <name evidence="1" type="primary">rhaA</name>
    <name type="ordered locus">YPDSF_3643</name>
</gene>
<dbReference type="EC" id="5.3.1.14" evidence="1"/>
<dbReference type="EMBL" id="CP000668">
    <property type="protein sequence ID" value="ABP41993.1"/>
    <property type="molecule type" value="Genomic_DNA"/>
</dbReference>
<dbReference type="RefSeq" id="WP_002209104.1">
    <property type="nucleotide sequence ID" value="NZ_CP009715.1"/>
</dbReference>
<dbReference type="SMR" id="A4TRT1"/>
<dbReference type="KEGG" id="ypp:YPDSF_3643"/>
<dbReference type="PATRIC" id="fig|386656.14.peg.305"/>
<dbReference type="UniPathway" id="UPA00541">
    <property type="reaction ID" value="UER00601"/>
</dbReference>
<dbReference type="GO" id="GO:0005737">
    <property type="term" value="C:cytoplasm"/>
    <property type="evidence" value="ECO:0007669"/>
    <property type="project" value="UniProtKB-SubCell"/>
</dbReference>
<dbReference type="GO" id="GO:0008740">
    <property type="term" value="F:L-rhamnose isomerase activity"/>
    <property type="evidence" value="ECO:0007669"/>
    <property type="project" value="UniProtKB-UniRule"/>
</dbReference>
<dbReference type="GO" id="GO:0030145">
    <property type="term" value="F:manganese ion binding"/>
    <property type="evidence" value="ECO:0007669"/>
    <property type="project" value="UniProtKB-UniRule"/>
</dbReference>
<dbReference type="GO" id="GO:0019324">
    <property type="term" value="P:L-lyxose metabolic process"/>
    <property type="evidence" value="ECO:0007669"/>
    <property type="project" value="TreeGrafter"/>
</dbReference>
<dbReference type="GO" id="GO:0019301">
    <property type="term" value="P:rhamnose catabolic process"/>
    <property type="evidence" value="ECO:0007669"/>
    <property type="project" value="UniProtKB-UniRule"/>
</dbReference>
<dbReference type="FunFam" id="3.20.20.150:FF:000006">
    <property type="entry name" value="L-rhamnose isomerase"/>
    <property type="match status" value="1"/>
</dbReference>
<dbReference type="Gene3D" id="3.20.20.150">
    <property type="entry name" value="Divalent-metal-dependent TIM barrel enzymes"/>
    <property type="match status" value="1"/>
</dbReference>
<dbReference type="HAMAP" id="MF_00541">
    <property type="entry name" value="RhaA"/>
    <property type="match status" value="1"/>
</dbReference>
<dbReference type="InterPro" id="IPR050337">
    <property type="entry name" value="L-rhamnose_isomerase"/>
</dbReference>
<dbReference type="InterPro" id="IPR009308">
    <property type="entry name" value="Rhamnose_isomerase"/>
</dbReference>
<dbReference type="InterPro" id="IPR036237">
    <property type="entry name" value="Xyl_isomerase-like_sf"/>
</dbReference>
<dbReference type="NCBIfam" id="NF002203">
    <property type="entry name" value="PRK01076.1"/>
    <property type="match status" value="1"/>
</dbReference>
<dbReference type="NCBIfam" id="TIGR01748">
    <property type="entry name" value="rhaA"/>
    <property type="match status" value="1"/>
</dbReference>
<dbReference type="PANTHER" id="PTHR30268">
    <property type="entry name" value="L-RHAMNOSE ISOMERASE"/>
    <property type="match status" value="1"/>
</dbReference>
<dbReference type="PANTHER" id="PTHR30268:SF0">
    <property type="entry name" value="L-RHAMNOSE ISOMERASE"/>
    <property type="match status" value="1"/>
</dbReference>
<dbReference type="Pfam" id="PF06134">
    <property type="entry name" value="RhaA"/>
    <property type="match status" value="1"/>
</dbReference>
<dbReference type="SUPFAM" id="SSF51658">
    <property type="entry name" value="Xylose isomerase-like"/>
    <property type="match status" value="1"/>
</dbReference>
<comment type="function">
    <text evidence="1">Catalyzes the interconversion of L-rhamnose and L-rhamnulose.</text>
</comment>
<comment type="catalytic activity">
    <reaction evidence="1">
        <text>L-rhamnopyranose = L-rhamnulose</text>
        <dbReference type="Rhea" id="RHEA:23160"/>
        <dbReference type="ChEBI" id="CHEBI:17897"/>
        <dbReference type="ChEBI" id="CHEBI:62346"/>
        <dbReference type="EC" id="5.3.1.14"/>
    </reaction>
</comment>
<comment type="cofactor">
    <cofactor evidence="1">
        <name>Mn(2+)</name>
        <dbReference type="ChEBI" id="CHEBI:29035"/>
    </cofactor>
    <text evidence="1">Binds 1 Mn(2+) ion per subunit.</text>
</comment>
<comment type="pathway">
    <text evidence="1">Carbohydrate degradation; L-rhamnose degradation; glycerone phosphate from L-rhamnose: step 1/3.</text>
</comment>
<comment type="subunit">
    <text evidence="1">Homotetramer.</text>
</comment>
<comment type="subcellular location">
    <subcellularLocation>
        <location evidence="1">Cytoplasm</location>
    </subcellularLocation>
</comment>
<comment type="similarity">
    <text evidence="1">Belongs to the rhamnose isomerase family.</text>
</comment>
<sequence length="418" mass="47160">MTNSIEQAWDLAKQRFAAVGVDVDAALTRLDTLPVSMHCWQGDDVTGFEDPDGVLTGGIQATGNYPGKARNATELRSDLELALALIPGPKRLNLHAIYLESDTPVARNKIEPRHFSHWVAWAKKHQLGLDFNPSCFSHPLSADGFTLSHADPEIRQFWIEHCQASRRVSAYFGEQLGTPSVMNIWIPDGMKDTPIDRLAPRQRLLSALDEVISEKLNPAHHIDAVESKLFGIGAESYTVGSNEFYMGYAASRQTALCLDAGHFHPTEVISDKISSAMLYVPRLLLHVSRPVRWDSDHVVLLDDETQAIASEIIRHNLFDRVHIGLDFFDASINRIAAWVIGTRNMKKALLRALLEPTDRLRQLELRGDYTARLALLEEQKSLPWQAIWEGYCQRNDVPVDARWLDAVREYEQQILSQR</sequence>
<reference key="1">
    <citation type="submission" date="2007-02" db="EMBL/GenBank/DDBJ databases">
        <title>Complete sequence of chromosome of Yersinia pestis Pestoides F.</title>
        <authorList>
            <consortium name="US DOE Joint Genome Institute"/>
            <person name="Copeland A."/>
            <person name="Lucas S."/>
            <person name="Lapidus A."/>
            <person name="Barry K."/>
            <person name="Detter J.C."/>
            <person name="Glavina del Rio T."/>
            <person name="Hammon N."/>
            <person name="Israni S."/>
            <person name="Dalin E."/>
            <person name="Tice H."/>
            <person name="Pitluck S."/>
            <person name="Di Bartolo G."/>
            <person name="Chain P."/>
            <person name="Malfatti S."/>
            <person name="Shin M."/>
            <person name="Vergez L."/>
            <person name="Schmutz J."/>
            <person name="Larimer F."/>
            <person name="Land M."/>
            <person name="Hauser L."/>
            <person name="Worsham P."/>
            <person name="Chu M."/>
            <person name="Bearden S."/>
            <person name="Garcia E."/>
            <person name="Richardson P."/>
        </authorList>
    </citation>
    <scope>NUCLEOTIDE SEQUENCE [LARGE SCALE GENOMIC DNA]</scope>
    <source>
        <strain>Pestoides F</strain>
    </source>
</reference>
<protein>
    <recommendedName>
        <fullName evidence="1">L-rhamnose isomerase</fullName>
        <ecNumber evidence="1">5.3.1.14</ecNumber>
    </recommendedName>
</protein>
<feature type="chain" id="PRO_1000017726" description="L-rhamnose isomerase">
    <location>
        <begin position="1"/>
        <end position="418"/>
    </location>
</feature>
<feature type="binding site" evidence="1">
    <location>
        <position position="262"/>
    </location>
    <ligand>
        <name>Mn(2+)</name>
        <dbReference type="ChEBI" id="CHEBI:29035"/>
    </ligand>
</feature>
<feature type="binding site" evidence="1">
    <location>
        <position position="294"/>
    </location>
    <ligand>
        <name>Mn(2+)</name>
        <dbReference type="ChEBI" id="CHEBI:29035"/>
    </ligand>
</feature>
<feature type="binding site" evidence="1">
    <location>
        <position position="296"/>
    </location>
    <ligand>
        <name>Mn(2+)</name>
        <dbReference type="ChEBI" id="CHEBI:29035"/>
    </ligand>
</feature>
<accession>A4TRT1</accession>
<name>RHAA_YERPP</name>
<organism>
    <name type="scientific">Yersinia pestis (strain Pestoides F)</name>
    <dbReference type="NCBI Taxonomy" id="386656"/>
    <lineage>
        <taxon>Bacteria</taxon>
        <taxon>Pseudomonadati</taxon>
        <taxon>Pseudomonadota</taxon>
        <taxon>Gammaproteobacteria</taxon>
        <taxon>Enterobacterales</taxon>
        <taxon>Yersiniaceae</taxon>
        <taxon>Yersinia</taxon>
    </lineage>
</organism>
<proteinExistence type="inferred from homology"/>